<keyword id="KW-0687">Ribonucleoprotein</keyword>
<keyword id="KW-0689">Ribosomal protein</keyword>
<keyword id="KW-0694">RNA-binding</keyword>
<keyword id="KW-0699">rRNA-binding</keyword>
<evidence type="ECO:0000255" key="1">
    <source>
        <dbReference type="HAMAP-Rule" id="MF_01325"/>
    </source>
</evidence>
<evidence type="ECO:0000305" key="2"/>
<comment type="function">
    <text evidence="1">One of the primary rRNA binding proteins, it binds directly near the 3'-end of the 23S rRNA, where it nucleates assembly of the 50S subunit.</text>
</comment>
<comment type="subunit">
    <text evidence="1">Part of the 50S ribosomal subunit. Forms a cluster with proteins L14 and L19.</text>
</comment>
<comment type="similarity">
    <text evidence="1">Belongs to the universal ribosomal protein uL3 family.</text>
</comment>
<name>RL3_SULSY</name>
<feature type="chain" id="PRO_1000141931" description="Large ribosomal subunit protein uL3">
    <location>
        <begin position="1"/>
        <end position="226"/>
    </location>
</feature>
<gene>
    <name evidence="1" type="primary">rplC</name>
    <name type="ordered locus">SYO3AOP1_0291</name>
</gene>
<organism>
    <name type="scientific">Sulfurihydrogenibium sp. (strain YO3AOP1)</name>
    <dbReference type="NCBI Taxonomy" id="436114"/>
    <lineage>
        <taxon>Bacteria</taxon>
        <taxon>Pseudomonadati</taxon>
        <taxon>Aquificota</taxon>
        <taxon>Aquificia</taxon>
        <taxon>Aquificales</taxon>
        <taxon>Hydrogenothermaceae</taxon>
        <taxon>Sulfurihydrogenibium</taxon>
    </lineage>
</organism>
<reference key="1">
    <citation type="journal article" date="2009" name="J. Bacteriol.">
        <title>Complete and draft genome sequences of six members of the Aquificales.</title>
        <authorList>
            <person name="Reysenbach A.-L."/>
            <person name="Hamamura N."/>
            <person name="Podar M."/>
            <person name="Griffiths E."/>
            <person name="Ferreira S."/>
            <person name="Hochstein R."/>
            <person name="Heidelberg J."/>
            <person name="Johnson J."/>
            <person name="Mead D."/>
            <person name="Pohorille A."/>
            <person name="Sarmiento M."/>
            <person name="Schweighofer K."/>
            <person name="Seshadri R."/>
            <person name="Voytek M.A."/>
        </authorList>
    </citation>
    <scope>NUCLEOTIDE SEQUENCE [LARGE SCALE GENOMIC DNA]</scope>
    <source>
        <strain>YO3AOP1</strain>
    </source>
</reference>
<proteinExistence type="inferred from homology"/>
<protein>
    <recommendedName>
        <fullName evidence="1">Large ribosomal subunit protein uL3</fullName>
    </recommendedName>
    <alternativeName>
        <fullName evidence="2">50S ribosomal protein L3</fullName>
    </alternativeName>
</protein>
<dbReference type="EMBL" id="CP001080">
    <property type="protein sequence ID" value="ACD65936.1"/>
    <property type="molecule type" value="Genomic_DNA"/>
</dbReference>
<dbReference type="RefSeq" id="WP_012459025.1">
    <property type="nucleotide sequence ID" value="NC_010730.1"/>
</dbReference>
<dbReference type="SMR" id="B2V7L3"/>
<dbReference type="STRING" id="436114.SYO3AOP1_0291"/>
<dbReference type="KEGG" id="sul:SYO3AOP1_0291"/>
<dbReference type="eggNOG" id="COG0087">
    <property type="taxonomic scope" value="Bacteria"/>
</dbReference>
<dbReference type="HOGENOM" id="CLU_044142_4_1_0"/>
<dbReference type="GO" id="GO:0022625">
    <property type="term" value="C:cytosolic large ribosomal subunit"/>
    <property type="evidence" value="ECO:0007669"/>
    <property type="project" value="TreeGrafter"/>
</dbReference>
<dbReference type="GO" id="GO:0019843">
    <property type="term" value="F:rRNA binding"/>
    <property type="evidence" value="ECO:0007669"/>
    <property type="project" value="UniProtKB-UniRule"/>
</dbReference>
<dbReference type="GO" id="GO:0003735">
    <property type="term" value="F:structural constituent of ribosome"/>
    <property type="evidence" value="ECO:0007669"/>
    <property type="project" value="InterPro"/>
</dbReference>
<dbReference type="GO" id="GO:0006412">
    <property type="term" value="P:translation"/>
    <property type="evidence" value="ECO:0007669"/>
    <property type="project" value="UniProtKB-UniRule"/>
</dbReference>
<dbReference type="FunFam" id="2.40.30.10:FF:000004">
    <property type="entry name" value="50S ribosomal protein L3"/>
    <property type="match status" value="1"/>
</dbReference>
<dbReference type="FunFam" id="3.30.160.810:FF:000001">
    <property type="entry name" value="50S ribosomal protein L3"/>
    <property type="match status" value="1"/>
</dbReference>
<dbReference type="Gene3D" id="3.30.160.810">
    <property type="match status" value="1"/>
</dbReference>
<dbReference type="Gene3D" id="2.40.30.10">
    <property type="entry name" value="Translation factors"/>
    <property type="match status" value="1"/>
</dbReference>
<dbReference type="HAMAP" id="MF_01325_B">
    <property type="entry name" value="Ribosomal_uL3_B"/>
    <property type="match status" value="1"/>
</dbReference>
<dbReference type="InterPro" id="IPR000597">
    <property type="entry name" value="Ribosomal_uL3"/>
</dbReference>
<dbReference type="InterPro" id="IPR019927">
    <property type="entry name" value="Ribosomal_uL3_bac/org-type"/>
</dbReference>
<dbReference type="InterPro" id="IPR009000">
    <property type="entry name" value="Transl_B-barrel_sf"/>
</dbReference>
<dbReference type="NCBIfam" id="TIGR03625">
    <property type="entry name" value="L3_bact"/>
    <property type="match status" value="1"/>
</dbReference>
<dbReference type="PANTHER" id="PTHR11229">
    <property type="entry name" value="50S RIBOSOMAL PROTEIN L3"/>
    <property type="match status" value="1"/>
</dbReference>
<dbReference type="PANTHER" id="PTHR11229:SF16">
    <property type="entry name" value="LARGE RIBOSOMAL SUBUNIT PROTEIN UL3C"/>
    <property type="match status" value="1"/>
</dbReference>
<dbReference type="Pfam" id="PF00297">
    <property type="entry name" value="Ribosomal_L3"/>
    <property type="match status" value="1"/>
</dbReference>
<dbReference type="SUPFAM" id="SSF50447">
    <property type="entry name" value="Translation proteins"/>
    <property type="match status" value="1"/>
</dbReference>
<sequence length="226" mass="24863">MPKGIIGKKIGMTKVFVNGKAIPVTVIQAGPCYVAYTRTQEKDGYNAVALTFGERKEKNIPKPLLAIFKKANIKPAKVIKEFPLKDGETVEPGQEIRIENVFEKGDLVDITGKSKGRGFTSVMKRWDFAGFPKSHGHRYHRAVGSIGCRTEPGRVWKTKRMAGHYGNETVTVLGLEVVDIIPEKNVILVKGSVPGAPNSTVFLKQSVIADRRKGKLKLAKSKAMYA</sequence>
<accession>B2V7L3</accession>